<proteinExistence type="evidence at protein level"/>
<reference key="1">
    <citation type="journal article" date="2014" name="Mol. Microbiol.">
        <title>Functional analysis of the conserved transcriptional regulator CfWor1 in Cladosporium fulvum reveals diverse roles in the virulence of plant pathogenic fungi.</title>
        <authorList>
            <person name="Okmen B."/>
            <person name="Collemare J."/>
            <person name="Griffiths S."/>
            <person name="van der Burgt A."/>
            <person name="Cox R."/>
            <person name="de Wit P.J."/>
        </authorList>
    </citation>
    <scope>INDUCTION</scope>
</reference>
<reference key="2">
    <citation type="journal article" date="2014" name="PLoS ONE">
        <title>Secondary metabolism and biotrophic lifestyle in the tomato pathogen Cladosporium fulvum.</title>
        <authorList>
            <person name="Collemare J."/>
            <person name="Griffiths S."/>
            <person name="Iida Y."/>
            <person name="Karimi Jashni M."/>
            <person name="Battaglia E."/>
            <person name="Cox R.J."/>
            <person name="de Wit P.J."/>
        </authorList>
    </citation>
    <scope>IDENTIFICATION</scope>
    <scope>FUNCTION</scope>
</reference>
<reference key="3">
    <citation type="journal article" date="2016" name="Proc. Natl. Acad. Sci. U.S.A.">
        <title>Elucidation of cladofulvin biosynthesis reveals a cytochrome P450 monooxygenase required for anthraquinone dimerization.</title>
        <authorList>
            <person name="Griffiths S."/>
            <person name="Mesarich C.H."/>
            <person name="Saccomanno B."/>
            <person name="Vaisberg A."/>
            <person name="De Wit P.J."/>
            <person name="Cox R."/>
            <person name="Collemare J."/>
        </authorList>
    </citation>
    <scope>INDUCTION</scope>
    <scope>FUNCTION</scope>
    <scope>CATALYTIC ACTIVITY</scope>
    <scope>PATHWAY</scope>
</reference>
<reference key="4">
    <citation type="journal article" date="2018" name="Mol. Plant Pathol.">
        <title>Down-regulation of cladofulvin biosynthesis is required for biotrophic growth of Cladosporium fulvum on tomato.</title>
        <authorList>
            <person name="Griffiths S."/>
            <person name="Mesarich C.H."/>
            <person name="Overdijk E.J.R."/>
            <person name="Saccomanno B."/>
            <person name="de Wit P.J.G.M."/>
            <person name="Collemare J."/>
        </authorList>
    </citation>
    <scope>INDUCTION</scope>
</reference>
<feature type="chain" id="PRO_0000445894" description="Scytalone dehydratase-like protein claB">
    <location>
        <begin position="1"/>
        <end position="162"/>
    </location>
</feature>
<feature type="active site" evidence="1">
    <location>
        <position position="83"/>
    </location>
</feature>
<feature type="active site" evidence="1">
    <location>
        <position position="108"/>
    </location>
</feature>
<feature type="binding site" evidence="1">
    <location>
        <position position="48"/>
    </location>
    <ligand>
        <name>substrate</name>
    </ligand>
</feature>
<protein>
    <recommendedName>
        <fullName evidence="6">Scytalone dehydratase-like protein claB</fullName>
        <ecNumber evidence="4">4.2.1.-</ecNumber>
    </recommendedName>
    <alternativeName>
        <fullName evidence="6">Cladofulvin biosynthesis cluster protein B</fullName>
    </alternativeName>
</protein>
<evidence type="ECO:0000250" key="1">
    <source>
        <dbReference type="UniProtKB" id="P56221"/>
    </source>
</evidence>
<evidence type="ECO:0000269" key="2">
    <source>
    </source>
</evidence>
<evidence type="ECO:0000269" key="3">
    <source>
    </source>
</evidence>
<evidence type="ECO:0000269" key="4">
    <source>
    </source>
</evidence>
<evidence type="ECO:0000269" key="5">
    <source>
    </source>
</evidence>
<evidence type="ECO:0000303" key="6">
    <source>
    </source>
</evidence>
<evidence type="ECO:0000305" key="7"/>
<keyword id="KW-0456">Lyase</keyword>
<comment type="function">
    <text evidence="2 4">Scytalone dehydratase-like protein; part of the gene cluster that mediates the biosynthesis of the bianthraquinone cladofulvin, a conidial pigment not required for virulence but that plays a role in fitness and resistance to environmental stresses including UV light and low-temperature stress (PubMed:24465762, PubMed:27274078). The pathway begins with the synthesis of atrochrysone thioester by the polyketide synthase (PKS) claG. The atrochrysone carboxyl ACP thioesterase claF then breaks the thioester bond and releases the atrochrysone carboxylic acid from claG (PubMed:27274078). This compound is decarboxylated by claH to yield emodin, which is further converted to chrysophanol hydroquinone by the reductase claC and the dehydratase claB (PubMed:27274078). The cytochrome P450 monooxygenase claM then catalyzes the dimerization of nataloe-emodin to cladofulvin (PubMed:27274078).</text>
</comment>
<comment type="pathway">
    <text evidence="4">Pigment biosynthesis.</text>
</comment>
<comment type="induction">
    <text evidence="3 4 5">Expression is positively regulated by the transcriptional regulator wor1 (PubMed:24521437, PubMed:27274078). Expression is down-regulated during biotrophic growth within tomato leaves (PubMed:27997759).</text>
</comment>
<comment type="similarity">
    <text evidence="7">Belongs to the scytalone dehydratase family.</text>
</comment>
<gene>
    <name evidence="6" type="primary">claB</name>
    <name type="ORF">Clafu184392</name>
</gene>
<name>CLAB_PASFU</name>
<sequence>MTRQAVPKPAYEDLVDCQSAMFEWAESFDSKDWDRLSACLAPTLFLDYSDIMGKKWDALPVEEFIGMASSPHFLGNARIKTQHFIGASKWTQPDEGQIVGFHQMRVAHQKYGDDELKQVLYHGHAHGKATTYYRNVGGQWKFAGLVPDVRWTEFDCDKIFEH</sequence>
<organism>
    <name type="scientific">Passalora fulva</name>
    <name type="common">Tomato leaf mold</name>
    <name type="synonym">Cladosporium fulvum</name>
    <dbReference type="NCBI Taxonomy" id="5499"/>
    <lineage>
        <taxon>Eukaryota</taxon>
        <taxon>Fungi</taxon>
        <taxon>Dikarya</taxon>
        <taxon>Ascomycota</taxon>
        <taxon>Pezizomycotina</taxon>
        <taxon>Dothideomycetes</taxon>
        <taxon>Dothideomycetidae</taxon>
        <taxon>Mycosphaerellales</taxon>
        <taxon>Mycosphaerellaceae</taxon>
        <taxon>Fulvia</taxon>
    </lineage>
</organism>
<accession>P0CU74</accession>
<dbReference type="EC" id="4.2.1.-" evidence="4"/>
<dbReference type="SMR" id="P0CU74"/>
<dbReference type="OMA" id="ARIKTQH"/>
<dbReference type="OrthoDB" id="5281072at2759"/>
<dbReference type="GO" id="GO:0030411">
    <property type="term" value="F:scytalone dehydratase activity"/>
    <property type="evidence" value="ECO:0007669"/>
    <property type="project" value="InterPro"/>
</dbReference>
<dbReference type="GO" id="GO:0006582">
    <property type="term" value="P:melanin metabolic process"/>
    <property type="evidence" value="ECO:0007669"/>
    <property type="project" value="InterPro"/>
</dbReference>
<dbReference type="Gene3D" id="3.10.450.50">
    <property type="match status" value="1"/>
</dbReference>
<dbReference type="InterPro" id="IPR032710">
    <property type="entry name" value="NTF2-like_dom_sf"/>
</dbReference>
<dbReference type="InterPro" id="IPR004235">
    <property type="entry name" value="Scytalone_dehydratase"/>
</dbReference>
<dbReference type="InterPro" id="IPR049884">
    <property type="entry name" value="Scytalone_dh"/>
</dbReference>
<dbReference type="Pfam" id="PF02982">
    <property type="entry name" value="Scytalone_dh"/>
    <property type="match status" value="1"/>
</dbReference>
<dbReference type="PIRSF" id="PIRSF024851">
    <property type="entry name" value="SCD1"/>
    <property type="match status" value="1"/>
</dbReference>
<dbReference type="SUPFAM" id="SSF54427">
    <property type="entry name" value="NTF2-like"/>
    <property type="match status" value="1"/>
</dbReference>